<keyword id="KW-0687">Ribonucleoprotein</keyword>
<keyword id="KW-0689">Ribosomal protein</keyword>
<keyword id="KW-0694">RNA-binding</keyword>
<keyword id="KW-0699">rRNA-binding</keyword>
<protein>
    <recommendedName>
        <fullName evidence="1">Large ribosomal subunit protein uL22</fullName>
    </recommendedName>
    <alternativeName>
        <fullName evidence="2">50S ribosomal protein L22</fullName>
    </alternativeName>
</protein>
<comment type="function">
    <text evidence="1">This protein binds specifically to 23S rRNA; its binding is stimulated by other ribosomal proteins, e.g. L4, L17, and L20. It is important during the early stages of 50S assembly. It makes multiple contacts with different domains of the 23S rRNA in the assembled 50S subunit and ribosome (By similarity).</text>
</comment>
<comment type="function">
    <text evidence="1">The globular domain of the protein is located near the polypeptide exit tunnel on the outside of the subunit, while an extended beta-hairpin is found that lines the wall of the exit tunnel in the center of the 70S ribosome.</text>
</comment>
<comment type="subunit">
    <text>Part of the 50S ribosomal subunit.</text>
</comment>
<comment type="similarity">
    <text evidence="1">Belongs to the universal ribosomal protein uL22 family.</text>
</comment>
<proteinExistence type="inferred from homology"/>
<gene>
    <name evidence="1" type="primary">rplV</name>
    <name type="ordered locus">MCAP_0691</name>
</gene>
<feature type="chain" id="PRO_0000125175" description="Large ribosomal subunit protein uL22">
    <location>
        <begin position="1"/>
        <end position="111"/>
    </location>
</feature>
<name>RL22_MYCCT</name>
<dbReference type="EMBL" id="X06414">
    <property type="protein sequence ID" value="CAA29709.1"/>
    <property type="molecule type" value="Genomic_DNA"/>
</dbReference>
<dbReference type="EMBL" id="CP000123">
    <property type="protein sequence ID" value="ABC01503.1"/>
    <property type="molecule type" value="Genomic_DNA"/>
</dbReference>
<dbReference type="EMBL" id="Z33011">
    <property type="protein sequence ID" value="CAA83691.1"/>
    <property type="molecule type" value="Genomic_DNA"/>
</dbReference>
<dbReference type="PIR" id="S02836">
    <property type="entry name" value="R5YM22"/>
</dbReference>
<dbReference type="RefSeq" id="WP_008362527.1">
    <property type="nucleotide sequence ID" value="NC_007633.1"/>
</dbReference>
<dbReference type="SMR" id="P10139"/>
<dbReference type="GeneID" id="93426138"/>
<dbReference type="KEGG" id="mcp:MCAP_0691"/>
<dbReference type="HOGENOM" id="CLU_083987_3_1_14"/>
<dbReference type="PhylomeDB" id="P10139"/>
<dbReference type="Proteomes" id="UP000001928">
    <property type="component" value="Chromosome"/>
</dbReference>
<dbReference type="GO" id="GO:0022625">
    <property type="term" value="C:cytosolic large ribosomal subunit"/>
    <property type="evidence" value="ECO:0007669"/>
    <property type="project" value="TreeGrafter"/>
</dbReference>
<dbReference type="GO" id="GO:0019843">
    <property type="term" value="F:rRNA binding"/>
    <property type="evidence" value="ECO:0007669"/>
    <property type="project" value="UniProtKB-UniRule"/>
</dbReference>
<dbReference type="GO" id="GO:0003735">
    <property type="term" value="F:structural constituent of ribosome"/>
    <property type="evidence" value="ECO:0007669"/>
    <property type="project" value="InterPro"/>
</dbReference>
<dbReference type="GO" id="GO:0006412">
    <property type="term" value="P:translation"/>
    <property type="evidence" value="ECO:0007669"/>
    <property type="project" value="UniProtKB-UniRule"/>
</dbReference>
<dbReference type="CDD" id="cd00336">
    <property type="entry name" value="Ribosomal_L22"/>
    <property type="match status" value="1"/>
</dbReference>
<dbReference type="Gene3D" id="3.90.470.10">
    <property type="entry name" value="Ribosomal protein L22/L17"/>
    <property type="match status" value="1"/>
</dbReference>
<dbReference type="HAMAP" id="MF_01331_B">
    <property type="entry name" value="Ribosomal_uL22_B"/>
    <property type="match status" value="1"/>
</dbReference>
<dbReference type="InterPro" id="IPR001063">
    <property type="entry name" value="Ribosomal_uL22"/>
</dbReference>
<dbReference type="InterPro" id="IPR005727">
    <property type="entry name" value="Ribosomal_uL22_bac/chlpt-type"/>
</dbReference>
<dbReference type="InterPro" id="IPR047867">
    <property type="entry name" value="Ribosomal_uL22_bac/org-type"/>
</dbReference>
<dbReference type="InterPro" id="IPR018260">
    <property type="entry name" value="Ribosomal_uL22_CS"/>
</dbReference>
<dbReference type="InterPro" id="IPR036394">
    <property type="entry name" value="Ribosomal_uL22_sf"/>
</dbReference>
<dbReference type="NCBIfam" id="TIGR01044">
    <property type="entry name" value="rplV_bact"/>
    <property type="match status" value="1"/>
</dbReference>
<dbReference type="PANTHER" id="PTHR13501">
    <property type="entry name" value="CHLOROPLAST 50S RIBOSOMAL PROTEIN L22-RELATED"/>
    <property type="match status" value="1"/>
</dbReference>
<dbReference type="PANTHER" id="PTHR13501:SF8">
    <property type="entry name" value="LARGE RIBOSOMAL SUBUNIT PROTEIN UL22M"/>
    <property type="match status" value="1"/>
</dbReference>
<dbReference type="Pfam" id="PF00237">
    <property type="entry name" value="Ribosomal_L22"/>
    <property type="match status" value="1"/>
</dbReference>
<dbReference type="SUPFAM" id="SSF54843">
    <property type="entry name" value="Ribosomal protein L22"/>
    <property type="match status" value="1"/>
</dbReference>
<dbReference type="PROSITE" id="PS00464">
    <property type="entry name" value="RIBOSOMAL_L22"/>
    <property type="match status" value="1"/>
</dbReference>
<evidence type="ECO:0000255" key="1">
    <source>
        <dbReference type="HAMAP-Rule" id="MF_01331"/>
    </source>
</evidence>
<evidence type="ECO:0000305" key="2"/>
<accession>P10139</accession>
<accession>Q2SRF8</accession>
<accession>Q6LAC1</accession>
<sequence length="111" mass="12374">MEAKAKLSMIRISPRKMRLVADTIRNKAVSVAVATLKNLNKDAAEPILKLLNSAVANAVNNNGMEADKLYVKTIFVNEGPTLKRFRPRAHGRAYEIFKRTSHVVIVVSDEK</sequence>
<organism>
    <name type="scientific">Mycoplasma capricolum subsp. capricolum (strain California kid / ATCC 27343 / NCTC 10154)</name>
    <dbReference type="NCBI Taxonomy" id="340047"/>
    <lineage>
        <taxon>Bacteria</taxon>
        <taxon>Bacillati</taxon>
        <taxon>Mycoplasmatota</taxon>
        <taxon>Mollicutes</taxon>
        <taxon>Mycoplasmataceae</taxon>
        <taxon>Mycoplasma</taxon>
    </lineage>
</organism>
<reference key="1">
    <citation type="journal article" date="1987" name="Mol. Gen. Genet.">
        <title>The ribosomal protein gene cluster of Mycoplasma capricolum.</title>
        <authorList>
            <person name="Ohkubo S."/>
            <person name="Muto A."/>
            <person name="Kawauchi Y."/>
            <person name="Yamao F."/>
            <person name="Osawa S."/>
        </authorList>
    </citation>
    <scope>NUCLEOTIDE SEQUENCE [GENOMIC DNA]</scope>
</reference>
<reference key="2">
    <citation type="submission" date="2005-09" db="EMBL/GenBank/DDBJ databases">
        <authorList>
            <person name="Glass J.I."/>
            <person name="Lartigue C."/>
            <person name="Pfannkoch C."/>
            <person name="Baden-Tillson H."/>
            <person name="Smith H.O."/>
            <person name="Venter J.C."/>
            <person name="Roske K."/>
            <person name="Wise K.S."/>
            <person name="Calcutt M.J."/>
            <person name="Nelson W.C."/>
            <person name="Nierman W.C."/>
        </authorList>
    </citation>
    <scope>NUCLEOTIDE SEQUENCE [LARGE SCALE GENOMIC DNA]</scope>
    <source>
        <strain>California kid / ATCC 27343 / NCTC 10154</strain>
    </source>
</reference>
<reference key="3">
    <citation type="journal article" date="1995" name="Mol. Microbiol.">
        <title>Exploring the Mycoplasma capricolum genome: a minimal cell reveals its physiology.</title>
        <authorList>
            <person name="Bork P."/>
            <person name="Ouzounis C."/>
            <person name="Casari G."/>
            <person name="Schneider R."/>
            <person name="Sander C."/>
            <person name="Dolan M."/>
            <person name="Gilbert W."/>
            <person name="Gillevet P.M."/>
        </authorList>
    </citation>
    <scope>NUCLEOTIDE SEQUENCE [GENOMIC DNA] OF 64-111</scope>
</reference>